<sequence length="187" mass="21633">MLKYNIRGENIEVTEPIRDYVEKKIDKLERYFTETPDANVHVNLKVYSDKNAKVEVTIPLPNLVLRAEETSGDLYASIDLIVDKLERQIRKHKTKVNRKFRDKGAERDYFAYSDVNGSTPPEENEGDFDLEIVRTKQFSLKPMDSEEAVLQMNLLGHSFYVYTDAETNGTNIVYSRKDGKYGLIETN</sequence>
<proteinExistence type="evidence at protein level"/>
<evidence type="ECO:0000255" key="1">
    <source>
        <dbReference type="HAMAP-Rule" id="MF_00839"/>
    </source>
</evidence>
<evidence type="ECO:0000269" key="2">
    <source>
    </source>
</evidence>
<evidence type="ECO:0000269" key="3">
    <source>
    </source>
</evidence>
<evidence type="ECO:0000303" key="4">
    <source>
    </source>
</evidence>
<evidence type="ECO:0000305" key="5">
    <source>
    </source>
</evidence>
<evidence type="ECO:0000305" key="6">
    <source>
    </source>
</evidence>
<protein>
    <recommendedName>
        <fullName evidence="1">Ribosome hibernation promotion factor</fullName>
        <shortName evidence="1 4">HPF</shortName>
    </recommendedName>
    <alternativeName>
        <fullName evidence="4">Ribosome hibernation-promoting factor</fullName>
    </alternativeName>
</protein>
<comment type="function">
    <text evidence="2 6">Involved in 100S ribosome formation from 70S ribosomes; 100S ribosomes are probably translationally inactive (PubMed:25422304). Ribosome hibernation may be used by the cell to decrease overall energy consumption under nutrient-limiting conditions (PubMed:26324267). Unlike E.coli, 100S ribosomes are present from mid-exponential growth, peak during the transition from log to stationary phase and then decrease (PubMed:25422304).</text>
</comment>
<comment type="subunit">
    <text evidence="1 2">Interacts with 100S ribosomes (PubMed:25422304).</text>
</comment>
<comment type="subcellular location">
    <subcellularLocation>
        <location evidence="1 5">Cytoplasm</location>
    </subcellularLocation>
</comment>
<comment type="induction">
    <text evidence="2">Transcribed early in log-phase growth, peaks at log to stationary phase transition (PubMed:25422304). Repressed by growth in the presence of glucose, which also decreases 100S ribosome content (PubMed:25422304). Induced by growth in ethanol, NaCl, and 46 degrees Celsius; stress respones are under control of the sigma-B factor (sigB) (PubMed:25422304).</text>
</comment>
<comment type="disruption phenotype">
    <text evidence="2 3">Loss of 100S ribosomes. Shows no change in growth in pure culture after 13 days, however performs very poorly (about 1000-fold decrease) in competition with wild-type (PubMed:25422304). About 5-fold less virulent than wild-type upon oral or tail vein injection of BALB/c mice (PubMed:25422304). Sensitive to aminoglycoside antibiotics in stationary phase; sensitivity is suppressed by transcription and translation inhibitors or by disrupting the proton motive force (PubMed:26324267). Stationary phase cells have 5-fold higher than normal levels of ATP and NADH and accumulates higher intracellular levels of gentamicin (PubMed:26324267). Aminoglycosides such as gentamicin bind to ribosomes and interfere with translation.</text>
</comment>
<comment type="similarity">
    <text evidence="1 5">Belongs to the HPF/YfiA ribosome-associated protein family. Long HPF subfamily.</text>
</comment>
<organism>
    <name type="scientific">Listeria monocytogenes serotype 1/2a (strain 10403S)</name>
    <dbReference type="NCBI Taxonomy" id="393133"/>
    <lineage>
        <taxon>Bacteria</taxon>
        <taxon>Bacillati</taxon>
        <taxon>Bacillota</taxon>
        <taxon>Bacilli</taxon>
        <taxon>Bacillales</taxon>
        <taxon>Listeriaceae</taxon>
        <taxon>Listeria</taxon>
    </lineage>
</organism>
<dbReference type="EMBL" id="CP002002">
    <property type="protein sequence ID" value="AEO07487.1"/>
    <property type="molecule type" value="Genomic_DNA"/>
</dbReference>
<dbReference type="RefSeq" id="WP_003722643.1">
    <property type="nucleotide sequence ID" value="NC_017544.1"/>
</dbReference>
<dbReference type="SMR" id="A0A0H3GEZ8"/>
<dbReference type="GeneID" id="93235918"/>
<dbReference type="KEGG" id="lmt:LMRG_01737"/>
<dbReference type="HOGENOM" id="CLU_071472_0_3_9"/>
<dbReference type="Proteomes" id="UP000001288">
    <property type="component" value="Chromosome"/>
</dbReference>
<dbReference type="GO" id="GO:0022627">
    <property type="term" value="C:cytosolic small ribosomal subunit"/>
    <property type="evidence" value="ECO:0007669"/>
    <property type="project" value="TreeGrafter"/>
</dbReference>
<dbReference type="GO" id="GO:0043024">
    <property type="term" value="F:ribosomal small subunit binding"/>
    <property type="evidence" value="ECO:0007669"/>
    <property type="project" value="TreeGrafter"/>
</dbReference>
<dbReference type="GO" id="GO:0045900">
    <property type="term" value="P:negative regulation of translational elongation"/>
    <property type="evidence" value="ECO:0007669"/>
    <property type="project" value="TreeGrafter"/>
</dbReference>
<dbReference type="CDD" id="cd00552">
    <property type="entry name" value="RaiA"/>
    <property type="match status" value="1"/>
</dbReference>
<dbReference type="FunFam" id="3.30.160.100:FF:000003">
    <property type="entry name" value="Ribosome hibernation promoting factor"/>
    <property type="match status" value="1"/>
</dbReference>
<dbReference type="FunFam" id="3.30.505.50:FF:000001">
    <property type="entry name" value="Ribosome hibernation promoting factor"/>
    <property type="match status" value="1"/>
</dbReference>
<dbReference type="Gene3D" id="3.30.160.100">
    <property type="entry name" value="Ribosome hibernation promotion factor-like"/>
    <property type="match status" value="1"/>
</dbReference>
<dbReference type="Gene3D" id="3.30.505.50">
    <property type="entry name" value="Sigma 54 modulation/S30EA ribosomal protein, C-terminal domain"/>
    <property type="match status" value="1"/>
</dbReference>
<dbReference type="HAMAP" id="MF_00839">
    <property type="entry name" value="HPF"/>
    <property type="match status" value="1"/>
</dbReference>
<dbReference type="InterPro" id="IPR050574">
    <property type="entry name" value="HPF/YfiA_ribosome-assoc"/>
</dbReference>
<dbReference type="InterPro" id="IPR034694">
    <property type="entry name" value="HPF_long/plastid"/>
</dbReference>
<dbReference type="InterPro" id="IPR036567">
    <property type="entry name" value="RHF-like"/>
</dbReference>
<dbReference type="InterPro" id="IPR003489">
    <property type="entry name" value="RHF/RaiA"/>
</dbReference>
<dbReference type="InterPro" id="IPR032528">
    <property type="entry name" value="Ribosom_S30AE_C"/>
</dbReference>
<dbReference type="InterPro" id="IPR038416">
    <property type="entry name" value="Ribosom_S30AE_C_sf"/>
</dbReference>
<dbReference type="NCBIfam" id="TIGR00741">
    <property type="entry name" value="yfiA"/>
    <property type="match status" value="1"/>
</dbReference>
<dbReference type="PANTHER" id="PTHR33231">
    <property type="entry name" value="30S RIBOSOMAL PROTEIN"/>
    <property type="match status" value="1"/>
</dbReference>
<dbReference type="PANTHER" id="PTHR33231:SF1">
    <property type="entry name" value="30S RIBOSOMAL PROTEIN"/>
    <property type="match status" value="1"/>
</dbReference>
<dbReference type="Pfam" id="PF16321">
    <property type="entry name" value="Ribosom_S30AE_C"/>
    <property type="match status" value="1"/>
</dbReference>
<dbReference type="Pfam" id="PF02482">
    <property type="entry name" value="Ribosomal_S30AE"/>
    <property type="match status" value="1"/>
</dbReference>
<dbReference type="SUPFAM" id="SSF69754">
    <property type="entry name" value="Ribosome binding protein Y (YfiA homologue)"/>
    <property type="match status" value="1"/>
</dbReference>
<feature type="chain" id="PRO_0000436445" description="Ribosome hibernation promotion factor">
    <location>
        <begin position="1"/>
        <end position="187"/>
    </location>
</feature>
<reference key="1">
    <citation type="submission" date="2010-04" db="EMBL/GenBank/DDBJ databases">
        <title>The genome sequence of Listeria monocytogenes strain 10403S.</title>
        <authorList>
            <consortium name="The Broad Institute Genome Sequencing Platform"/>
            <consortium name="The Broad Institute Genome Sequencing Center for Infectious Disease"/>
            <person name="Borowsky M."/>
            <person name="Borodovsky M."/>
            <person name="Young S.K."/>
            <person name="Zeng Q."/>
            <person name="Koehrsen M."/>
            <person name="Fitzgerald M."/>
            <person name="Wiedmann M."/>
            <person name="Swaminathan B."/>
            <person name="Lauer P."/>
            <person name="Portnoy D."/>
            <person name="Cossart P."/>
            <person name="Buchrieser C."/>
            <person name="Higgins D."/>
            <person name="Abouelleil A."/>
            <person name="Alvarado L."/>
            <person name="Arachchi H.M."/>
            <person name="Berlin A."/>
            <person name="Borenstein D."/>
            <person name="Brown A."/>
            <person name="Chapman S.B."/>
            <person name="Chen Z."/>
            <person name="Dunbar C.D."/>
            <person name="Engels R."/>
            <person name="Freedman E."/>
            <person name="Gearin G."/>
            <person name="Gellesch M."/>
            <person name="Goldberg J."/>
            <person name="Griggs A."/>
            <person name="Gujja S."/>
            <person name="Heilman E."/>
            <person name="Heiman D."/>
            <person name="Howarth C."/>
            <person name="Jen D."/>
            <person name="Larson L."/>
            <person name="Lui A."/>
            <person name="MacDonald J."/>
            <person name="Mehta T."/>
            <person name="Montmayeur A."/>
            <person name="Neiman D."/>
            <person name="Park D."/>
            <person name="Pearson M."/>
            <person name="Priest M."/>
            <person name="Richards J."/>
            <person name="Roberts A."/>
            <person name="Saif S."/>
            <person name="Shea T."/>
            <person name="Shenoy N."/>
            <person name="Sisk P."/>
            <person name="Stolte C."/>
            <person name="Sykes S."/>
            <person name="Walk T."/>
            <person name="White J."/>
            <person name="Yandava C."/>
            <person name="Haas B."/>
            <person name="Nusbaum C."/>
            <person name="Birren B."/>
        </authorList>
    </citation>
    <scope>NUCLEOTIDE SEQUENCE [LARGE SCALE GENOMIC DNA]</scope>
    <source>
        <strain>10403S</strain>
    </source>
</reference>
<reference key="2">
    <citation type="journal article" date="2015" name="J. Bacteriol.">
        <title>The Listeria monocytogenes hibernation-promoting factor is required for the formation of 100S ribosomes, optimal fitness, and pathogenesis.</title>
        <authorList>
            <person name="Kline B.C."/>
            <person name="McKay S.L."/>
            <person name="Tang W.W."/>
            <person name="Portnoy D.A."/>
        </authorList>
    </citation>
    <scope>FUNCTION</scope>
    <scope>SUBUNIT</scope>
    <scope>SUBCELLULAR LOCATION</scope>
    <scope>INDUCTION</scope>
    <scope>DISRUPTION PHENOTYPE</scope>
    <source>
        <strain>10403S</strain>
    </source>
</reference>
<reference key="3">
    <citation type="journal article" date="2015" name="Antimicrob. Agents Chemother.">
        <title>Ribosome hibernation facilitates tolerance of stationary-phase bacteria to aminoglycosides.</title>
        <authorList>
            <person name="McKay S.L."/>
            <person name="Portnoy D.A."/>
        </authorList>
    </citation>
    <scope>FUNCTION</scope>
    <scope>DISRUPTION PHENOTYPE</scope>
    <source>
        <strain>10403S</strain>
    </source>
</reference>
<keyword id="KW-0963">Cytoplasm</keyword>
<keyword id="KW-0346">Stress response</keyword>
<keyword id="KW-0810">Translation regulation</keyword>
<gene>
    <name evidence="1 4" type="primary">hpf</name>
    <name type="ordered locus">LMRG_01737</name>
</gene>
<name>HPF_LISM4</name>
<accession>A0A0H3GEZ8</accession>